<protein>
    <recommendedName>
        <fullName>Probable fimbrial chaperone protein ElfD</fullName>
    </recommendedName>
</protein>
<name>ELFD_ECO57</name>
<organism>
    <name type="scientific">Escherichia coli O157:H7</name>
    <dbReference type="NCBI Taxonomy" id="83334"/>
    <lineage>
        <taxon>Bacteria</taxon>
        <taxon>Pseudomonadati</taxon>
        <taxon>Pseudomonadota</taxon>
        <taxon>Gammaproteobacteria</taxon>
        <taxon>Enterobacterales</taxon>
        <taxon>Enterobacteriaceae</taxon>
        <taxon>Escherichia</taxon>
    </lineage>
</organism>
<dbReference type="EMBL" id="AE005174">
    <property type="protein sequence ID" value="AAG55424.1"/>
    <property type="molecule type" value="Genomic_DNA"/>
</dbReference>
<dbReference type="EMBL" id="BA000007">
    <property type="protein sequence ID" value="BAB34445.1"/>
    <property type="molecule type" value="Genomic_DNA"/>
</dbReference>
<dbReference type="PIR" id="D85620">
    <property type="entry name" value="D85620"/>
</dbReference>
<dbReference type="PIR" id="F90756">
    <property type="entry name" value="F90756"/>
</dbReference>
<dbReference type="RefSeq" id="NP_309049.1">
    <property type="nucleotide sequence ID" value="NC_002695.1"/>
</dbReference>
<dbReference type="RefSeq" id="WP_001303867.1">
    <property type="nucleotide sequence ID" value="NZ_VOAI01000006.1"/>
</dbReference>
<dbReference type="SMR" id="Q8X5E4"/>
<dbReference type="STRING" id="155864.Z1287"/>
<dbReference type="GeneID" id="917764"/>
<dbReference type="KEGG" id="ece:Z1287"/>
<dbReference type="KEGG" id="ecs:ECs_1022"/>
<dbReference type="PATRIC" id="fig|386585.9.peg.1144"/>
<dbReference type="eggNOG" id="COG3121">
    <property type="taxonomic scope" value="Bacteria"/>
</dbReference>
<dbReference type="HOGENOM" id="CLU_070768_2_1_6"/>
<dbReference type="OMA" id="FTWAAGK"/>
<dbReference type="Proteomes" id="UP000000558">
    <property type="component" value="Chromosome"/>
</dbReference>
<dbReference type="Proteomes" id="UP000002519">
    <property type="component" value="Chromosome"/>
</dbReference>
<dbReference type="GO" id="GO:0030288">
    <property type="term" value="C:outer membrane-bounded periplasmic space"/>
    <property type="evidence" value="ECO:0007669"/>
    <property type="project" value="InterPro"/>
</dbReference>
<dbReference type="GO" id="GO:0071555">
    <property type="term" value="P:cell wall organization"/>
    <property type="evidence" value="ECO:0007669"/>
    <property type="project" value="InterPro"/>
</dbReference>
<dbReference type="GO" id="GO:0061077">
    <property type="term" value="P:chaperone-mediated protein folding"/>
    <property type="evidence" value="ECO:0007669"/>
    <property type="project" value="InterPro"/>
</dbReference>
<dbReference type="FunFam" id="2.60.40.10:FF:000458">
    <property type="entry name" value="Molecular chaperone FimC"/>
    <property type="match status" value="1"/>
</dbReference>
<dbReference type="Gene3D" id="2.60.40.10">
    <property type="entry name" value="Immunoglobulins"/>
    <property type="match status" value="2"/>
</dbReference>
<dbReference type="InterPro" id="IPR013783">
    <property type="entry name" value="Ig-like_fold"/>
</dbReference>
<dbReference type="InterPro" id="IPR008962">
    <property type="entry name" value="PapD-like_sf"/>
</dbReference>
<dbReference type="InterPro" id="IPR050643">
    <property type="entry name" value="Periplasmic_pilus_chap"/>
</dbReference>
<dbReference type="InterPro" id="IPR036316">
    <property type="entry name" value="Pili_assmbl_chap_C_dom_sf"/>
</dbReference>
<dbReference type="InterPro" id="IPR001829">
    <property type="entry name" value="Pili_assmbl_chaperone_bac"/>
</dbReference>
<dbReference type="InterPro" id="IPR016148">
    <property type="entry name" value="Pili_assmbl_chaperone_C"/>
</dbReference>
<dbReference type="InterPro" id="IPR018046">
    <property type="entry name" value="Pili_assmbl_chaperone_CS"/>
</dbReference>
<dbReference type="InterPro" id="IPR016147">
    <property type="entry name" value="Pili_assmbl_chaperone_N"/>
</dbReference>
<dbReference type="PANTHER" id="PTHR30251:SF0">
    <property type="entry name" value="FIMBRIAL CHAPERONE PROTEIN ELFD-RELATED"/>
    <property type="match status" value="1"/>
</dbReference>
<dbReference type="PANTHER" id="PTHR30251">
    <property type="entry name" value="PILUS ASSEMBLY CHAPERONE"/>
    <property type="match status" value="1"/>
</dbReference>
<dbReference type="Pfam" id="PF02753">
    <property type="entry name" value="PapD_C"/>
    <property type="match status" value="1"/>
</dbReference>
<dbReference type="Pfam" id="PF00345">
    <property type="entry name" value="PapD_N"/>
    <property type="match status" value="1"/>
</dbReference>
<dbReference type="PRINTS" id="PR00969">
    <property type="entry name" value="CHAPERONPILI"/>
</dbReference>
<dbReference type="SUPFAM" id="SSF49354">
    <property type="entry name" value="PapD-like"/>
    <property type="match status" value="1"/>
</dbReference>
<dbReference type="SUPFAM" id="SSF49584">
    <property type="entry name" value="Periplasmic chaperone C-domain"/>
    <property type="match status" value="1"/>
</dbReference>
<dbReference type="PROSITE" id="PS00635">
    <property type="entry name" value="PILI_CHAPERONE"/>
    <property type="match status" value="1"/>
</dbReference>
<keyword id="KW-0143">Chaperone</keyword>
<keyword id="KW-1029">Fimbrium biogenesis</keyword>
<keyword id="KW-0574">Periplasm</keyword>
<keyword id="KW-1185">Reference proteome</keyword>
<keyword id="KW-0732">Signal</keyword>
<reference key="1">
    <citation type="journal article" date="2001" name="Nature">
        <title>Genome sequence of enterohaemorrhagic Escherichia coli O157:H7.</title>
        <authorList>
            <person name="Perna N.T."/>
            <person name="Plunkett G. III"/>
            <person name="Burland V."/>
            <person name="Mau B."/>
            <person name="Glasner J.D."/>
            <person name="Rose D.J."/>
            <person name="Mayhew G.F."/>
            <person name="Evans P.S."/>
            <person name="Gregor J."/>
            <person name="Kirkpatrick H.A."/>
            <person name="Posfai G."/>
            <person name="Hackett J."/>
            <person name="Klink S."/>
            <person name="Boutin A."/>
            <person name="Shao Y."/>
            <person name="Miller L."/>
            <person name="Grotbeck E.J."/>
            <person name="Davis N.W."/>
            <person name="Lim A."/>
            <person name="Dimalanta E.T."/>
            <person name="Potamousis K."/>
            <person name="Apodaca J."/>
            <person name="Anantharaman T.S."/>
            <person name="Lin J."/>
            <person name="Yen G."/>
            <person name="Schwartz D.C."/>
            <person name="Welch R.A."/>
            <person name="Blattner F.R."/>
        </authorList>
    </citation>
    <scope>NUCLEOTIDE SEQUENCE [LARGE SCALE GENOMIC DNA]</scope>
    <source>
        <strain>O157:H7 / EDL933 / ATCC 700927 / EHEC</strain>
    </source>
</reference>
<reference key="2">
    <citation type="journal article" date="2001" name="DNA Res.">
        <title>Complete genome sequence of enterohemorrhagic Escherichia coli O157:H7 and genomic comparison with a laboratory strain K-12.</title>
        <authorList>
            <person name="Hayashi T."/>
            <person name="Makino K."/>
            <person name="Ohnishi M."/>
            <person name="Kurokawa K."/>
            <person name="Ishii K."/>
            <person name="Yokoyama K."/>
            <person name="Han C.-G."/>
            <person name="Ohtsubo E."/>
            <person name="Nakayama K."/>
            <person name="Murata T."/>
            <person name="Tanaka M."/>
            <person name="Tobe T."/>
            <person name="Iida T."/>
            <person name="Takami H."/>
            <person name="Honda T."/>
            <person name="Sasakawa C."/>
            <person name="Ogasawara N."/>
            <person name="Yasunaga T."/>
            <person name="Kuhara S."/>
            <person name="Shiba T."/>
            <person name="Hattori M."/>
            <person name="Shinagawa H."/>
        </authorList>
    </citation>
    <scope>NUCLEOTIDE SEQUENCE [LARGE SCALE GENOMIC DNA]</scope>
    <source>
        <strain>O157:H7 / Sakai / RIMD 0509952 / EHEC</strain>
    </source>
</reference>
<reference key="3">
    <citation type="journal article" date="2009" name="Environ. Microbiol.">
        <title>The Escherichia coli ycbQRST operon encodes fimbriae with laminin-binding and epithelial cell adherence properties in Shiga-toxigenic E.coli O157:H7.</title>
        <authorList>
            <person name="Samadder P."/>
            <person name="Xicohtencatl-Cortes J."/>
            <person name="Saldana Z."/>
            <person name="Jordan D."/>
            <person name="Tarr P.I."/>
            <person name="Kaper J.B."/>
            <person name="Giron J.A."/>
        </authorList>
    </citation>
    <scope>FUNCTION</scope>
    <scope>INDUCTION</scope>
    <scope>GENE NAME</scope>
    <source>
        <strain>O157:H7 / EDL933 / ATCC 700927 / EHEC</strain>
    </source>
</reference>
<accession>Q8X5E4</accession>
<accession>Q7AG43</accession>
<comment type="function">
    <text evidence="3">Part of the elfADCG fimbrial operon, which could be required for adherence to host epithelial cells. Could be required for the biogenesis of the ElfA fimbriae.</text>
</comment>
<comment type="subcellular location">
    <subcellularLocation>
        <location evidence="1">Periplasm</location>
    </subcellularLocation>
</comment>
<comment type="induction">
    <text evidence="3">Induced in the presence of epithelial cells.</text>
</comment>
<comment type="similarity">
    <text evidence="4">Belongs to the periplasmic pilus chaperone family.</text>
</comment>
<evidence type="ECO:0000250" key="1"/>
<evidence type="ECO:0000255" key="2"/>
<evidence type="ECO:0000269" key="3">
    <source>
    </source>
</evidence>
<evidence type="ECO:0000305" key="4"/>
<sequence length="233" mass="25420">MKTCITKGIVTVSLTAILLSCSSTWAAGKGGVGLAATRLVYSEGEEQISLGVRNTSPDVPYLIQSWVMTPDNKKSADFIITPPLFVLNPANENLLRIMYIGAPLAKDRETLFFTSVRAVPSTTKREEGNTLKIATQSVIKLFWRPKGLAYPLGEAPAKLRCTSSADMVTVSNPTPYFITLTDLKIGGKLVKNQMISPFDKYQFSLPKGAKNSSVTYRTINDYGAETPQLNCKS</sequence>
<feature type="signal peptide" evidence="2">
    <location>
        <begin position="1"/>
        <end position="26"/>
    </location>
</feature>
<feature type="chain" id="PRO_0000413218" description="Probable fimbrial chaperone protein ElfD">
    <location>
        <begin position="27"/>
        <end position="233"/>
    </location>
</feature>
<proteinExistence type="evidence at transcript level"/>
<gene>
    <name type="primary">elfD</name>
    <name type="synonym">ycbR</name>
    <name type="ordered locus">ECs1022</name>
    <name type="ordered locus">Z1287</name>
</gene>